<sequence>MTTQVVNVIGAGLAGSEAAYQIAKRGVQVRLYEMRPVRQTPAHHTDKFAELVCSNSLRANTLTNAVGVIKEEMRLMDSVIIRAADECSVPAGGALAVDRHEFAAKVTEYVKNHPNVTVMNEEITEIPEGPTIIATGPLTSPDLSAQLKELTGEDYFYFYDAAAPIVEKDSIDMNKVYLKSRYDKGEAAYLNCPMTEEEFDRFYEALIAAETVPLKEFEKEIFFEGCMPVEVMASRGRQTLVFGPMKPVGLEDPKTGKTPYAVVQLRQDDAAGTLYNIVGFQTHLKWGPQKEVLQLIPGLENAEIVRYGVMHRNTFINSPNLLRPTYQYKQRDDLFFAGQMTGVEGYVESAASGLLAGINAARLVKGEEPVVLPPVTAMGSMANYITATNAKNFQPMNANFGLFAPLEKKIKKKAERNEAYATRALETIRNFVNI</sequence>
<protein>
    <recommendedName>
        <fullName evidence="1">Methylenetetrahydrofolate--tRNA-(uracil-5-)-methyltransferase TrmFO</fullName>
        <ecNumber evidence="1">2.1.1.74</ecNumber>
    </recommendedName>
    <alternativeName>
        <fullName evidence="1">Folate-dependent tRNA (uracil-5-)-methyltransferase</fullName>
    </alternativeName>
    <alternativeName>
        <fullName evidence="1">Folate-dependent tRNA(M-5-U54)-methyltransferase</fullName>
    </alternativeName>
</protein>
<organism>
    <name type="scientific">Bacillus thuringiensis subsp. konkukian (strain 97-27)</name>
    <dbReference type="NCBI Taxonomy" id="281309"/>
    <lineage>
        <taxon>Bacteria</taxon>
        <taxon>Bacillati</taxon>
        <taxon>Bacillota</taxon>
        <taxon>Bacilli</taxon>
        <taxon>Bacillales</taxon>
        <taxon>Bacillaceae</taxon>
        <taxon>Bacillus</taxon>
        <taxon>Bacillus cereus group</taxon>
    </lineage>
</organism>
<dbReference type="EC" id="2.1.1.74" evidence="1"/>
<dbReference type="EMBL" id="AE017355">
    <property type="protein sequence ID" value="AAT61118.1"/>
    <property type="molecule type" value="Genomic_DNA"/>
</dbReference>
<dbReference type="RefSeq" id="WP_001991958.1">
    <property type="nucleotide sequence ID" value="NC_005957.1"/>
</dbReference>
<dbReference type="RefSeq" id="YP_037893.1">
    <property type="nucleotide sequence ID" value="NC_005957.1"/>
</dbReference>
<dbReference type="SMR" id="Q6HEY3"/>
<dbReference type="KEGG" id="btk:BT9727_3573"/>
<dbReference type="PATRIC" id="fig|281309.8.peg.3811"/>
<dbReference type="HOGENOM" id="CLU_033057_1_0_9"/>
<dbReference type="Proteomes" id="UP000001301">
    <property type="component" value="Chromosome"/>
</dbReference>
<dbReference type="GO" id="GO:0005829">
    <property type="term" value="C:cytosol"/>
    <property type="evidence" value="ECO:0007669"/>
    <property type="project" value="TreeGrafter"/>
</dbReference>
<dbReference type="GO" id="GO:0050660">
    <property type="term" value="F:flavin adenine dinucleotide binding"/>
    <property type="evidence" value="ECO:0007669"/>
    <property type="project" value="UniProtKB-UniRule"/>
</dbReference>
<dbReference type="GO" id="GO:0047151">
    <property type="term" value="F:tRNA (uracil(54)-C5)-methyltransferase activity, 5,10-methylenetetrahydrofolate-dependent"/>
    <property type="evidence" value="ECO:0007669"/>
    <property type="project" value="UniProtKB-UniRule"/>
</dbReference>
<dbReference type="GO" id="GO:0030488">
    <property type="term" value="P:tRNA methylation"/>
    <property type="evidence" value="ECO:0007669"/>
    <property type="project" value="TreeGrafter"/>
</dbReference>
<dbReference type="GO" id="GO:0002098">
    <property type="term" value="P:tRNA wobble uridine modification"/>
    <property type="evidence" value="ECO:0007669"/>
    <property type="project" value="TreeGrafter"/>
</dbReference>
<dbReference type="FunFam" id="3.50.50.60:FF:000035">
    <property type="entry name" value="Methylenetetrahydrofolate--tRNA-(uracil-5-)-methyltransferase TrmFO"/>
    <property type="match status" value="1"/>
</dbReference>
<dbReference type="FunFam" id="3.50.50.60:FF:000040">
    <property type="entry name" value="Methylenetetrahydrofolate--tRNA-(uracil-5-)-methyltransferase TrmFO"/>
    <property type="match status" value="1"/>
</dbReference>
<dbReference type="Gene3D" id="3.50.50.60">
    <property type="entry name" value="FAD/NAD(P)-binding domain"/>
    <property type="match status" value="2"/>
</dbReference>
<dbReference type="HAMAP" id="MF_01037">
    <property type="entry name" value="TrmFO"/>
    <property type="match status" value="1"/>
</dbReference>
<dbReference type="InterPro" id="IPR036188">
    <property type="entry name" value="FAD/NAD-bd_sf"/>
</dbReference>
<dbReference type="InterPro" id="IPR002218">
    <property type="entry name" value="MnmG-rel"/>
</dbReference>
<dbReference type="InterPro" id="IPR020595">
    <property type="entry name" value="MnmG-rel_CS"/>
</dbReference>
<dbReference type="InterPro" id="IPR040131">
    <property type="entry name" value="MnmG_N"/>
</dbReference>
<dbReference type="InterPro" id="IPR004417">
    <property type="entry name" value="TrmFO"/>
</dbReference>
<dbReference type="NCBIfam" id="TIGR00137">
    <property type="entry name" value="gid_trmFO"/>
    <property type="match status" value="1"/>
</dbReference>
<dbReference type="NCBIfam" id="NF003739">
    <property type="entry name" value="PRK05335.1"/>
    <property type="match status" value="1"/>
</dbReference>
<dbReference type="PANTHER" id="PTHR11806">
    <property type="entry name" value="GLUCOSE INHIBITED DIVISION PROTEIN A"/>
    <property type="match status" value="1"/>
</dbReference>
<dbReference type="PANTHER" id="PTHR11806:SF2">
    <property type="entry name" value="METHYLENETETRAHYDROFOLATE--TRNA-(URACIL-5-)-METHYLTRANSFERASE TRMFO"/>
    <property type="match status" value="1"/>
</dbReference>
<dbReference type="Pfam" id="PF01134">
    <property type="entry name" value="GIDA"/>
    <property type="match status" value="1"/>
</dbReference>
<dbReference type="SUPFAM" id="SSF51905">
    <property type="entry name" value="FAD/NAD(P)-binding domain"/>
    <property type="match status" value="1"/>
</dbReference>
<dbReference type="PROSITE" id="PS01281">
    <property type="entry name" value="GIDA_2"/>
    <property type="match status" value="1"/>
</dbReference>
<accession>Q6HEY3</accession>
<gene>
    <name evidence="1" type="primary">trmFO</name>
    <name type="synonym">gid</name>
    <name type="ordered locus">BT9727_3573</name>
</gene>
<proteinExistence type="inferred from homology"/>
<comment type="function">
    <text evidence="1">Catalyzes the folate-dependent formation of 5-methyl-uridine at position 54 (M-5-U54) in all tRNAs.</text>
</comment>
<comment type="catalytic activity">
    <reaction evidence="1">
        <text>uridine(54) in tRNA + (6R)-5,10-methylene-5,6,7,8-tetrahydrofolate + NADH + H(+) = 5-methyluridine(54) in tRNA + (6S)-5,6,7,8-tetrahydrofolate + NAD(+)</text>
        <dbReference type="Rhea" id="RHEA:16873"/>
        <dbReference type="Rhea" id="RHEA-COMP:10167"/>
        <dbReference type="Rhea" id="RHEA-COMP:10193"/>
        <dbReference type="ChEBI" id="CHEBI:15378"/>
        <dbReference type="ChEBI" id="CHEBI:15636"/>
        <dbReference type="ChEBI" id="CHEBI:57453"/>
        <dbReference type="ChEBI" id="CHEBI:57540"/>
        <dbReference type="ChEBI" id="CHEBI:57945"/>
        <dbReference type="ChEBI" id="CHEBI:65315"/>
        <dbReference type="ChEBI" id="CHEBI:74447"/>
        <dbReference type="EC" id="2.1.1.74"/>
    </reaction>
</comment>
<comment type="catalytic activity">
    <reaction evidence="1">
        <text>uridine(54) in tRNA + (6R)-5,10-methylene-5,6,7,8-tetrahydrofolate + NADPH + H(+) = 5-methyluridine(54) in tRNA + (6S)-5,6,7,8-tetrahydrofolate + NADP(+)</text>
        <dbReference type="Rhea" id="RHEA:62372"/>
        <dbReference type="Rhea" id="RHEA-COMP:10167"/>
        <dbReference type="Rhea" id="RHEA-COMP:10193"/>
        <dbReference type="ChEBI" id="CHEBI:15378"/>
        <dbReference type="ChEBI" id="CHEBI:15636"/>
        <dbReference type="ChEBI" id="CHEBI:57453"/>
        <dbReference type="ChEBI" id="CHEBI:57783"/>
        <dbReference type="ChEBI" id="CHEBI:58349"/>
        <dbReference type="ChEBI" id="CHEBI:65315"/>
        <dbReference type="ChEBI" id="CHEBI:74447"/>
        <dbReference type="EC" id="2.1.1.74"/>
    </reaction>
</comment>
<comment type="cofactor">
    <cofactor evidence="1">
        <name>FAD</name>
        <dbReference type="ChEBI" id="CHEBI:57692"/>
    </cofactor>
</comment>
<comment type="subcellular location">
    <subcellularLocation>
        <location evidence="1">Cytoplasm</location>
    </subcellularLocation>
</comment>
<comment type="similarity">
    <text evidence="1">Belongs to the MnmG family. TrmFO subfamily.</text>
</comment>
<name>TRMFO_BACHK</name>
<evidence type="ECO:0000255" key="1">
    <source>
        <dbReference type="HAMAP-Rule" id="MF_01037"/>
    </source>
</evidence>
<reference key="1">
    <citation type="journal article" date="2006" name="J. Bacteriol.">
        <title>Pathogenomic sequence analysis of Bacillus cereus and Bacillus thuringiensis isolates closely related to Bacillus anthracis.</title>
        <authorList>
            <person name="Han C.S."/>
            <person name="Xie G."/>
            <person name="Challacombe J.F."/>
            <person name="Altherr M.R."/>
            <person name="Bhotika S.S."/>
            <person name="Bruce D."/>
            <person name="Campbell C.S."/>
            <person name="Campbell M.L."/>
            <person name="Chen J."/>
            <person name="Chertkov O."/>
            <person name="Cleland C."/>
            <person name="Dimitrijevic M."/>
            <person name="Doggett N.A."/>
            <person name="Fawcett J.J."/>
            <person name="Glavina T."/>
            <person name="Goodwin L.A."/>
            <person name="Hill K.K."/>
            <person name="Hitchcock P."/>
            <person name="Jackson P.J."/>
            <person name="Keim P."/>
            <person name="Kewalramani A.R."/>
            <person name="Longmire J."/>
            <person name="Lucas S."/>
            <person name="Malfatti S."/>
            <person name="McMurry K."/>
            <person name="Meincke L.J."/>
            <person name="Misra M."/>
            <person name="Moseman B.L."/>
            <person name="Mundt M."/>
            <person name="Munk A.C."/>
            <person name="Okinaka R.T."/>
            <person name="Parson-Quintana B."/>
            <person name="Reilly L.P."/>
            <person name="Richardson P."/>
            <person name="Robinson D.L."/>
            <person name="Rubin E."/>
            <person name="Saunders E."/>
            <person name="Tapia R."/>
            <person name="Tesmer J.G."/>
            <person name="Thayer N."/>
            <person name="Thompson L.S."/>
            <person name="Tice H."/>
            <person name="Ticknor L.O."/>
            <person name="Wills P.L."/>
            <person name="Brettin T.S."/>
            <person name="Gilna P."/>
        </authorList>
    </citation>
    <scope>NUCLEOTIDE SEQUENCE [LARGE SCALE GENOMIC DNA]</scope>
    <source>
        <strain>97-27</strain>
    </source>
</reference>
<feature type="chain" id="PRO_0000117235" description="Methylenetetrahydrofolate--tRNA-(uracil-5-)-methyltransferase TrmFO">
    <location>
        <begin position="1"/>
        <end position="434"/>
    </location>
</feature>
<feature type="binding site" evidence="1">
    <location>
        <begin position="10"/>
        <end position="15"/>
    </location>
    <ligand>
        <name>FAD</name>
        <dbReference type="ChEBI" id="CHEBI:57692"/>
    </ligand>
</feature>
<keyword id="KW-0963">Cytoplasm</keyword>
<keyword id="KW-0274">FAD</keyword>
<keyword id="KW-0285">Flavoprotein</keyword>
<keyword id="KW-0489">Methyltransferase</keyword>
<keyword id="KW-0520">NAD</keyword>
<keyword id="KW-0521">NADP</keyword>
<keyword id="KW-0808">Transferase</keyword>
<keyword id="KW-0819">tRNA processing</keyword>